<accession>Q39Z17</accession>
<gene>
    <name type="ordered locus">Gmet_0262</name>
</gene>
<keyword id="KW-1185">Reference proteome</keyword>
<dbReference type="EMBL" id="CP000148">
    <property type="protein sequence ID" value="ABB30507.1"/>
    <property type="molecule type" value="Genomic_DNA"/>
</dbReference>
<dbReference type="RefSeq" id="WP_004513579.1">
    <property type="nucleotide sequence ID" value="NC_007517.1"/>
</dbReference>
<dbReference type="SMR" id="Q39Z17"/>
<dbReference type="STRING" id="269799.Gmet_0262"/>
<dbReference type="KEGG" id="gme:Gmet_0262"/>
<dbReference type="eggNOG" id="COG3132">
    <property type="taxonomic scope" value="Bacteria"/>
</dbReference>
<dbReference type="HOGENOM" id="CLU_057831_1_0_7"/>
<dbReference type="Proteomes" id="UP000007073">
    <property type="component" value="Chromosome"/>
</dbReference>
<dbReference type="Gene3D" id="1.10.10.10">
    <property type="entry name" value="Winged helix-like DNA-binding domain superfamily/Winged helix DNA-binding domain"/>
    <property type="match status" value="2"/>
</dbReference>
<dbReference type="HAMAP" id="MF_01584">
    <property type="entry name" value="UPF0502"/>
    <property type="match status" value="1"/>
</dbReference>
<dbReference type="InterPro" id="IPR007432">
    <property type="entry name" value="DUF480"/>
</dbReference>
<dbReference type="InterPro" id="IPR036388">
    <property type="entry name" value="WH-like_DNA-bd_sf"/>
</dbReference>
<dbReference type="InterPro" id="IPR036390">
    <property type="entry name" value="WH_DNA-bd_sf"/>
</dbReference>
<dbReference type="PANTHER" id="PTHR38768">
    <property type="entry name" value="UPF0502 PROTEIN YCEH"/>
    <property type="match status" value="1"/>
</dbReference>
<dbReference type="PANTHER" id="PTHR38768:SF1">
    <property type="entry name" value="UPF0502 PROTEIN YCEH"/>
    <property type="match status" value="1"/>
</dbReference>
<dbReference type="Pfam" id="PF04337">
    <property type="entry name" value="DUF480"/>
    <property type="match status" value="1"/>
</dbReference>
<dbReference type="SUPFAM" id="SSF46785">
    <property type="entry name" value="Winged helix' DNA-binding domain"/>
    <property type="match status" value="2"/>
</dbReference>
<sequence length="219" mass="24779">METVLNSCEIRVLGCLVEKELATPEYYPLTLNALTAACNQKSNRDPVMALEDADVVRALDSLRMKGFARQSAEGVRAMKYCHCLAEKFLLEPPDLAVLAELLVRGPQTVGELRTRAERMRPFADLAAVEEVLRMLMEREEPLVTRLPRQPGRKEQRYAHLLAGAPEAEGEESMAPPEGARLQVRAENERVARLEEEVTALRAEVAELRRMMEEFRSQFE</sequence>
<reference key="1">
    <citation type="journal article" date="2009" name="BMC Microbiol.">
        <title>The genome sequence of Geobacter metallireducens: features of metabolism, physiology and regulation common and dissimilar to Geobacter sulfurreducens.</title>
        <authorList>
            <person name="Aklujkar M."/>
            <person name="Krushkal J."/>
            <person name="DiBartolo G."/>
            <person name="Lapidus A."/>
            <person name="Land M.L."/>
            <person name="Lovley D.R."/>
        </authorList>
    </citation>
    <scope>NUCLEOTIDE SEQUENCE [LARGE SCALE GENOMIC DNA]</scope>
    <source>
        <strain>ATCC 53774 / DSM 7210 / GS-15</strain>
    </source>
</reference>
<comment type="similarity">
    <text evidence="1">Belongs to the UPF0502 family.</text>
</comment>
<organism>
    <name type="scientific">Geobacter metallireducens (strain ATCC 53774 / DSM 7210 / GS-15)</name>
    <dbReference type="NCBI Taxonomy" id="269799"/>
    <lineage>
        <taxon>Bacteria</taxon>
        <taxon>Pseudomonadati</taxon>
        <taxon>Thermodesulfobacteriota</taxon>
        <taxon>Desulfuromonadia</taxon>
        <taxon>Geobacterales</taxon>
        <taxon>Geobacteraceae</taxon>
        <taxon>Geobacter</taxon>
    </lineage>
</organism>
<protein>
    <recommendedName>
        <fullName evidence="1">UPF0502 protein Gmet_0262</fullName>
    </recommendedName>
</protein>
<feature type="chain" id="PRO_0000309390" description="UPF0502 protein Gmet_0262">
    <location>
        <begin position="1"/>
        <end position="219"/>
    </location>
</feature>
<evidence type="ECO:0000255" key="1">
    <source>
        <dbReference type="HAMAP-Rule" id="MF_01584"/>
    </source>
</evidence>
<name>Y262_GEOMG</name>
<proteinExistence type="inferred from homology"/>